<comment type="function">
    <text evidence="1">Catalyzes the ATP-dependent amination of UTP to CTP with either L-glutamine or ammonia as the source of nitrogen. Regulates intracellular CTP levels through interactions with the four ribonucleotide triphosphates.</text>
</comment>
<comment type="catalytic activity">
    <reaction evidence="1">
        <text>UTP + L-glutamine + ATP + H2O = CTP + L-glutamate + ADP + phosphate + 2 H(+)</text>
        <dbReference type="Rhea" id="RHEA:26426"/>
        <dbReference type="ChEBI" id="CHEBI:15377"/>
        <dbReference type="ChEBI" id="CHEBI:15378"/>
        <dbReference type="ChEBI" id="CHEBI:29985"/>
        <dbReference type="ChEBI" id="CHEBI:30616"/>
        <dbReference type="ChEBI" id="CHEBI:37563"/>
        <dbReference type="ChEBI" id="CHEBI:43474"/>
        <dbReference type="ChEBI" id="CHEBI:46398"/>
        <dbReference type="ChEBI" id="CHEBI:58359"/>
        <dbReference type="ChEBI" id="CHEBI:456216"/>
        <dbReference type="EC" id="6.3.4.2"/>
    </reaction>
</comment>
<comment type="catalytic activity">
    <reaction evidence="1">
        <text>L-glutamine + H2O = L-glutamate + NH4(+)</text>
        <dbReference type="Rhea" id="RHEA:15889"/>
        <dbReference type="ChEBI" id="CHEBI:15377"/>
        <dbReference type="ChEBI" id="CHEBI:28938"/>
        <dbReference type="ChEBI" id="CHEBI:29985"/>
        <dbReference type="ChEBI" id="CHEBI:58359"/>
    </reaction>
</comment>
<comment type="catalytic activity">
    <reaction evidence="1">
        <text>UTP + NH4(+) + ATP = CTP + ADP + phosphate + 2 H(+)</text>
        <dbReference type="Rhea" id="RHEA:16597"/>
        <dbReference type="ChEBI" id="CHEBI:15378"/>
        <dbReference type="ChEBI" id="CHEBI:28938"/>
        <dbReference type="ChEBI" id="CHEBI:30616"/>
        <dbReference type="ChEBI" id="CHEBI:37563"/>
        <dbReference type="ChEBI" id="CHEBI:43474"/>
        <dbReference type="ChEBI" id="CHEBI:46398"/>
        <dbReference type="ChEBI" id="CHEBI:456216"/>
    </reaction>
</comment>
<comment type="activity regulation">
    <text evidence="1">Allosterically activated by GTP, when glutamine is the substrate; GTP has no effect on the reaction when ammonia is the substrate. The allosteric effector GTP functions by stabilizing the protein conformation that binds the tetrahedral intermediate(s) formed during glutamine hydrolysis. Inhibited by the product CTP, via allosteric rather than competitive inhibition.</text>
</comment>
<comment type="pathway">
    <text evidence="1">Pyrimidine metabolism; CTP biosynthesis via de novo pathway; CTP from UDP: step 2/2.</text>
</comment>
<comment type="subunit">
    <text evidence="1">Homotetramer.</text>
</comment>
<comment type="miscellaneous">
    <text evidence="1">CTPSs have evolved a hybrid strategy for distinguishing between UTP and CTP. The overlapping regions of the product feedback inhibitory and substrate sites recognize a common feature in both compounds, the triphosphate moiety. To differentiate isosteric substrate and product pyrimidine rings, an additional pocket far from the expected kinase/ligase catalytic site, specifically recognizes the cytosine and ribose portions of the product inhibitor.</text>
</comment>
<comment type="similarity">
    <text evidence="1">Belongs to the CTP synthase family.</text>
</comment>
<feature type="chain" id="PRO_1000139410" description="CTP synthase">
    <location>
        <begin position="1"/>
        <end position="543"/>
    </location>
</feature>
<feature type="domain" description="Glutamine amidotransferase type-1" evidence="1">
    <location>
        <begin position="292"/>
        <end position="543"/>
    </location>
</feature>
<feature type="region of interest" description="Amidoligase domain" evidence="1">
    <location>
        <begin position="1"/>
        <end position="267"/>
    </location>
</feature>
<feature type="active site" description="Nucleophile; for glutamine hydrolysis" evidence="1">
    <location>
        <position position="381"/>
    </location>
</feature>
<feature type="active site" evidence="1">
    <location>
        <position position="516"/>
    </location>
</feature>
<feature type="active site" evidence="1">
    <location>
        <position position="518"/>
    </location>
</feature>
<feature type="binding site" evidence="1">
    <location>
        <position position="15"/>
    </location>
    <ligand>
        <name>CTP</name>
        <dbReference type="ChEBI" id="CHEBI:37563"/>
        <note>allosteric inhibitor</note>
    </ligand>
</feature>
<feature type="binding site" evidence="1">
    <location>
        <position position="15"/>
    </location>
    <ligand>
        <name>UTP</name>
        <dbReference type="ChEBI" id="CHEBI:46398"/>
    </ligand>
</feature>
<feature type="binding site" evidence="1">
    <location>
        <begin position="16"/>
        <end position="21"/>
    </location>
    <ligand>
        <name>ATP</name>
        <dbReference type="ChEBI" id="CHEBI:30616"/>
    </ligand>
</feature>
<feature type="binding site" evidence="1">
    <location>
        <position position="73"/>
    </location>
    <ligand>
        <name>ATP</name>
        <dbReference type="ChEBI" id="CHEBI:30616"/>
    </ligand>
</feature>
<feature type="binding site" evidence="1">
    <location>
        <position position="73"/>
    </location>
    <ligand>
        <name>Mg(2+)</name>
        <dbReference type="ChEBI" id="CHEBI:18420"/>
    </ligand>
</feature>
<feature type="binding site" evidence="1">
    <location>
        <position position="141"/>
    </location>
    <ligand>
        <name>Mg(2+)</name>
        <dbReference type="ChEBI" id="CHEBI:18420"/>
    </ligand>
</feature>
<feature type="binding site" evidence="1">
    <location>
        <begin position="148"/>
        <end position="150"/>
    </location>
    <ligand>
        <name>CTP</name>
        <dbReference type="ChEBI" id="CHEBI:37563"/>
        <note>allosteric inhibitor</note>
    </ligand>
</feature>
<feature type="binding site" evidence="1">
    <location>
        <begin position="188"/>
        <end position="193"/>
    </location>
    <ligand>
        <name>CTP</name>
        <dbReference type="ChEBI" id="CHEBI:37563"/>
        <note>allosteric inhibitor</note>
    </ligand>
</feature>
<feature type="binding site" evidence="1">
    <location>
        <begin position="188"/>
        <end position="193"/>
    </location>
    <ligand>
        <name>UTP</name>
        <dbReference type="ChEBI" id="CHEBI:46398"/>
    </ligand>
</feature>
<feature type="binding site" evidence="1">
    <location>
        <position position="224"/>
    </location>
    <ligand>
        <name>CTP</name>
        <dbReference type="ChEBI" id="CHEBI:37563"/>
        <note>allosteric inhibitor</note>
    </ligand>
</feature>
<feature type="binding site" evidence="1">
    <location>
        <position position="224"/>
    </location>
    <ligand>
        <name>UTP</name>
        <dbReference type="ChEBI" id="CHEBI:46398"/>
    </ligand>
</feature>
<feature type="binding site" evidence="1">
    <location>
        <position position="354"/>
    </location>
    <ligand>
        <name>L-glutamine</name>
        <dbReference type="ChEBI" id="CHEBI:58359"/>
    </ligand>
</feature>
<feature type="binding site" evidence="1">
    <location>
        <begin position="382"/>
        <end position="385"/>
    </location>
    <ligand>
        <name>L-glutamine</name>
        <dbReference type="ChEBI" id="CHEBI:58359"/>
    </ligand>
</feature>
<feature type="binding site" evidence="1">
    <location>
        <position position="405"/>
    </location>
    <ligand>
        <name>L-glutamine</name>
        <dbReference type="ChEBI" id="CHEBI:58359"/>
    </ligand>
</feature>
<feature type="binding site" evidence="1">
    <location>
        <position position="473"/>
    </location>
    <ligand>
        <name>L-glutamine</name>
        <dbReference type="ChEBI" id="CHEBI:58359"/>
    </ligand>
</feature>
<reference key="1">
    <citation type="submission" date="2007-07" db="EMBL/GenBank/DDBJ databases">
        <title>Complete genome sequence of Campylobacter jejuni subsp doylei 269.97 isolated from human blood.</title>
        <authorList>
            <person name="Fouts D.E."/>
            <person name="Mongodin E.F."/>
            <person name="Puiu D."/>
            <person name="Sebastian Y."/>
            <person name="Miller W.G."/>
            <person name="Mandrell R.E."/>
            <person name="Lastovica A.J."/>
            <person name="Nelson K.E."/>
        </authorList>
    </citation>
    <scope>NUCLEOTIDE SEQUENCE [LARGE SCALE GENOMIC DNA]</scope>
    <source>
        <strain>ATCC BAA-1458 / RM4099 / 269.97</strain>
    </source>
</reference>
<protein>
    <recommendedName>
        <fullName evidence="1">CTP synthase</fullName>
        <ecNumber evidence="1">6.3.4.2</ecNumber>
    </recommendedName>
    <alternativeName>
        <fullName evidence="1">Cytidine 5'-triphosphate synthase</fullName>
    </alternativeName>
    <alternativeName>
        <fullName evidence="1">Cytidine triphosphate synthetase</fullName>
        <shortName evidence="1">CTP synthetase</shortName>
        <shortName evidence="1">CTPS</shortName>
    </alternativeName>
    <alternativeName>
        <fullName evidence="1">UTP--ammonia ligase</fullName>
    </alternativeName>
</protein>
<name>PYRG_CAMJD</name>
<sequence length="543" mass="60302">MKQTKYIFVTGGVLSSLGKGIAAASIATLLKNSGLKASILKADPYINVDPGTMSPFEHGEVFVTDDGAETDLDLGHYERFLDESLSQDNNFTTGRVYQSVIEKERRGEYLGKTIQVIPHIVGEIKDRIKKAGEGKDILIVEIGGTVGDIEGLPFLEAIRALRLEVGKNNAMNIHLTLVPFIKAAGELKTKPTQHSVGELRRIGISPDMIICRSEKALDRDLKDKIAISCGVEKNCVIESVDAASIYQIPLNFLKQDILNPIAEILDLKNLKPNMENWDSLVKRVIAPSNEVKIAFVGKYVDLKESYKSLTEAIIHAGAALDTKVELKWVDSEKLENMESAEVFKDVSGILVAGGFGYRGVEGKIKAIQYARENKIPFLGICLGMQLALVEFARNVLKLKDANSSEFDEKCENPVVYLIDEFMDTNGEKQIRTAKTPLGGTMRLGAYKCDIKEKSLLAKVYNEAKSVKERHRHRYEANPKYRVDFEKHGLIVSGESKGLIEAVELNCHPFFLAVQFHPEFTSRLEHVNPVICGFIKAAINYEDN</sequence>
<organism>
    <name type="scientific">Campylobacter jejuni subsp. doylei (strain ATCC BAA-1458 / RM4099 / 269.97)</name>
    <dbReference type="NCBI Taxonomy" id="360109"/>
    <lineage>
        <taxon>Bacteria</taxon>
        <taxon>Pseudomonadati</taxon>
        <taxon>Campylobacterota</taxon>
        <taxon>Epsilonproteobacteria</taxon>
        <taxon>Campylobacterales</taxon>
        <taxon>Campylobacteraceae</taxon>
        <taxon>Campylobacter</taxon>
    </lineage>
</organism>
<accession>A7H1B7</accession>
<evidence type="ECO:0000255" key="1">
    <source>
        <dbReference type="HAMAP-Rule" id="MF_01227"/>
    </source>
</evidence>
<gene>
    <name evidence="1" type="primary">pyrG</name>
    <name type="ordered locus">JJD26997_0029</name>
</gene>
<proteinExistence type="inferred from homology"/>
<keyword id="KW-0067">ATP-binding</keyword>
<keyword id="KW-0315">Glutamine amidotransferase</keyword>
<keyword id="KW-0436">Ligase</keyword>
<keyword id="KW-0460">Magnesium</keyword>
<keyword id="KW-0479">Metal-binding</keyword>
<keyword id="KW-0547">Nucleotide-binding</keyword>
<keyword id="KW-0665">Pyrimidine biosynthesis</keyword>
<dbReference type="EC" id="6.3.4.2" evidence="1"/>
<dbReference type="EMBL" id="CP000768">
    <property type="protein sequence ID" value="ABS43723.1"/>
    <property type="molecule type" value="Genomic_DNA"/>
</dbReference>
<dbReference type="SMR" id="A7H1B7"/>
<dbReference type="MEROPS" id="C26.964"/>
<dbReference type="KEGG" id="cjd:JJD26997_0029"/>
<dbReference type="HOGENOM" id="CLU_011675_5_0_7"/>
<dbReference type="UniPathway" id="UPA00159">
    <property type="reaction ID" value="UER00277"/>
</dbReference>
<dbReference type="Proteomes" id="UP000002302">
    <property type="component" value="Chromosome"/>
</dbReference>
<dbReference type="GO" id="GO:0005829">
    <property type="term" value="C:cytosol"/>
    <property type="evidence" value="ECO:0007669"/>
    <property type="project" value="TreeGrafter"/>
</dbReference>
<dbReference type="GO" id="GO:0005524">
    <property type="term" value="F:ATP binding"/>
    <property type="evidence" value="ECO:0007669"/>
    <property type="project" value="UniProtKB-KW"/>
</dbReference>
<dbReference type="GO" id="GO:0003883">
    <property type="term" value="F:CTP synthase activity"/>
    <property type="evidence" value="ECO:0007669"/>
    <property type="project" value="UniProtKB-UniRule"/>
</dbReference>
<dbReference type="GO" id="GO:0004359">
    <property type="term" value="F:glutaminase activity"/>
    <property type="evidence" value="ECO:0007669"/>
    <property type="project" value="RHEA"/>
</dbReference>
<dbReference type="GO" id="GO:0042802">
    <property type="term" value="F:identical protein binding"/>
    <property type="evidence" value="ECO:0007669"/>
    <property type="project" value="TreeGrafter"/>
</dbReference>
<dbReference type="GO" id="GO:0046872">
    <property type="term" value="F:metal ion binding"/>
    <property type="evidence" value="ECO:0007669"/>
    <property type="project" value="UniProtKB-KW"/>
</dbReference>
<dbReference type="GO" id="GO:0044210">
    <property type="term" value="P:'de novo' CTP biosynthetic process"/>
    <property type="evidence" value="ECO:0007669"/>
    <property type="project" value="UniProtKB-UniRule"/>
</dbReference>
<dbReference type="GO" id="GO:0019856">
    <property type="term" value="P:pyrimidine nucleobase biosynthetic process"/>
    <property type="evidence" value="ECO:0007669"/>
    <property type="project" value="TreeGrafter"/>
</dbReference>
<dbReference type="CDD" id="cd03113">
    <property type="entry name" value="CTPS_N"/>
    <property type="match status" value="1"/>
</dbReference>
<dbReference type="CDD" id="cd01746">
    <property type="entry name" value="GATase1_CTP_Synthase"/>
    <property type="match status" value="1"/>
</dbReference>
<dbReference type="FunFam" id="3.40.50.300:FF:000009">
    <property type="entry name" value="CTP synthase"/>
    <property type="match status" value="1"/>
</dbReference>
<dbReference type="FunFam" id="3.40.50.880:FF:000002">
    <property type="entry name" value="CTP synthase"/>
    <property type="match status" value="1"/>
</dbReference>
<dbReference type="Gene3D" id="3.40.50.880">
    <property type="match status" value="1"/>
</dbReference>
<dbReference type="Gene3D" id="3.40.50.300">
    <property type="entry name" value="P-loop containing nucleotide triphosphate hydrolases"/>
    <property type="match status" value="1"/>
</dbReference>
<dbReference type="HAMAP" id="MF_01227">
    <property type="entry name" value="PyrG"/>
    <property type="match status" value="1"/>
</dbReference>
<dbReference type="InterPro" id="IPR029062">
    <property type="entry name" value="Class_I_gatase-like"/>
</dbReference>
<dbReference type="InterPro" id="IPR004468">
    <property type="entry name" value="CTP_synthase"/>
</dbReference>
<dbReference type="InterPro" id="IPR017456">
    <property type="entry name" value="CTP_synthase_N"/>
</dbReference>
<dbReference type="InterPro" id="IPR017926">
    <property type="entry name" value="GATASE"/>
</dbReference>
<dbReference type="InterPro" id="IPR033828">
    <property type="entry name" value="GATase1_CTP_Synthase"/>
</dbReference>
<dbReference type="InterPro" id="IPR027417">
    <property type="entry name" value="P-loop_NTPase"/>
</dbReference>
<dbReference type="NCBIfam" id="NF003792">
    <property type="entry name" value="PRK05380.1"/>
    <property type="match status" value="1"/>
</dbReference>
<dbReference type="NCBIfam" id="TIGR00337">
    <property type="entry name" value="PyrG"/>
    <property type="match status" value="1"/>
</dbReference>
<dbReference type="PANTHER" id="PTHR11550">
    <property type="entry name" value="CTP SYNTHASE"/>
    <property type="match status" value="1"/>
</dbReference>
<dbReference type="PANTHER" id="PTHR11550:SF0">
    <property type="entry name" value="CTP SYNTHASE-RELATED"/>
    <property type="match status" value="1"/>
</dbReference>
<dbReference type="Pfam" id="PF06418">
    <property type="entry name" value="CTP_synth_N"/>
    <property type="match status" value="1"/>
</dbReference>
<dbReference type="Pfam" id="PF00117">
    <property type="entry name" value="GATase"/>
    <property type="match status" value="1"/>
</dbReference>
<dbReference type="SUPFAM" id="SSF52317">
    <property type="entry name" value="Class I glutamine amidotransferase-like"/>
    <property type="match status" value="1"/>
</dbReference>
<dbReference type="SUPFAM" id="SSF52540">
    <property type="entry name" value="P-loop containing nucleoside triphosphate hydrolases"/>
    <property type="match status" value="1"/>
</dbReference>
<dbReference type="PROSITE" id="PS51273">
    <property type="entry name" value="GATASE_TYPE_1"/>
    <property type="match status" value="1"/>
</dbReference>